<name>KGP66_PORGN</name>
<reference evidence="11 12" key="1">
    <citation type="journal article" date="1997" name="J. Biol. Chem.">
        <title>Molecular cloning and characterization of Porphyromonas gingivalis lysine-specific gingipain. A new member of an emerging family of pathogenic bacterial cysteine proteinases.</title>
        <authorList>
            <person name="Pavloff N."/>
            <person name="Pemberton P.A."/>
            <person name="Potempa J."/>
            <person name="Chen W.C."/>
            <person name="Pike R.N."/>
            <person name="Prochazka V."/>
            <person name="Kiefer M.C."/>
            <person name="Travis J."/>
            <person name="Barr P.J."/>
        </authorList>
    </citation>
    <scope>NUCLEOTIDE SEQUENCE [GENOMIC DNA]</scope>
    <scope>CATALYTIC ACTIVITY</scope>
    <scope>FUNCTION</scope>
    <scope>SUBCELLULAR LOCATION</scope>
    <source>
        <strain evidence="8">HG66</strain>
    </source>
</reference>
<reference evidence="11" key="2">
    <citation type="journal article" date="2004" name="J. Clin. Microbiol.">
        <title>Distribution of Porphyromonas gingivalis biotypes defined by alleles of the kgp (Lys-gingipain) gene.</title>
        <authorList>
            <person name="Nadkarni M.A."/>
            <person name="Nguyen K.A."/>
            <person name="Chapple C.C."/>
            <person name="DeCarlo A.A."/>
            <person name="Jacques N.A."/>
            <person name="Hunter N."/>
        </authorList>
    </citation>
    <scope>POLYMORPHISM</scope>
</reference>
<evidence type="ECO:0000250" key="1">
    <source>
        <dbReference type="UniProtKB" id="B2RLK2"/>
    </source>
</evidence>
<evidence type="ECO:0000250" key="2">
    <source>
        <dbReference type="UniProtKB" id="P72194"/>
    </source>
</evidence>
<evidence type="ECO:0000250" key="3">
    <source>
        <dbReference type="UniProtKB" id="P95493"/>
    </source>
</evidence>
<evidence type="ECO:0000250" key="4">
    <source>
        <dbReference type="UniProtKB" id="Q51817"/>
    </source>
</evidence>
<evidence type="ECO:0000255" key="5"/>
<evidence type="ECO:0000256" key="6">
    <source>
        <dbReference type="SAM" id="MobiDB-lite"/>
    </source>
</evidence>
<evidence type="ECO:0000269" key="7">
    <source>
    </source>
</evidence>
<evidence type="ECO:0000269" key="8">
    <source>
    </source>
</evidence>
<evidence type="ECO:0000303" key="9">
    <source>
    </source>
</evidence>
<evidence type="ECO:0000303" key="10">
    <source>
    </source>
</evidence>
<evidence type="ECO:0000305" key="11"/>
<evidence type="ECO:0000312" key="12">
    <source>
        <dbReference type="EMBL" id="AAA99810.1"/>
    </source>
</evidence>
<proteinExistence type="evidence at protein level"/>
<protein>
    <recommendedName>
        <fullName evidence="9 10 12">Lys-gingipain HG66</fullName>
        <ecNumber evidence="8">3.4.22.47</ecNumber>
    </recommendedName>
    <component>
        <recommendedName>
            <fullName evidence="1 4">Lys-gingipain catalytic subunit</fullName>
        </recommendedName>
    </component>
    <component>
        <recommendedName>
            <fullName evidence="4">39 kDa adhesin</fullName>
        </recommendedName>
    </component>
    <component>
        <recommendedName>
            <fullName evidence="4">15 kDa adhesin</fullName>
        </recommendedName>
    </component>
    <component>
        <recommendedName>
            <fullName evidence="4">44 kDa adhesin</fullName>
        </recommendedName>
    </component>
</protein>
<accession>P72197</accession>
<comment type="function">
    <text evidence="1 8">Cysteine proteinase with a strong preference for substrates with Lys in the P1 position (PubMed:8999833). Hydrolyzes bovine hemoglobin, bovine serum albumin, casein, human placental type I collagen and human IgA and IgG. Disrupts the functions of polymorphonuclear leukocytes. May act as a virulence factor in the development of peridontal disease. Involved in the coaggregation of P.gingivalis with other oral bacteria (By similarity).</text>
</comment>
<comment type="catalytic activity">
    <reaction evidence="8">
        <text>Endopeptidase with strict specificity for lysyl bonds.</text>
        <dbReference type="EC" id="3.4.22.47"/>
    </reaction>
</comment>
<comment type="subcellular location">
    <molecule>Lys-gingipain catalytic subunit</molecule>
    <subcellularLocation>
        <location evidence="8">Secreted</location>
    </subcellularLocation>
</comment>
<comment type="PTM">
    <text evidence="2 4">Proteolytically cleaved into a catalytic subunit and three adhesins. Arg-gingipain is involved in this post-translational processing (By similarity).</text>
</comment>
<comment type="polymorphism">
    <text evidence="7">Several forms of kgp with differences at the C-terminus exist in different P.gingivalis strains.</text>
</comment>
<comment type="similarity">
    <text evidence="5">Belongs to the peptidase C25 family.</text>
</comment>
<organism>
    <name type="scientific">Porphyromonas gingivalis</name>
    <name type="common">Bacteroides gingivalis</name>
    <dbReference type="NCBI Taxonomy" id="837"/>
    <lineage>
        <taxon>Bacteria</taxon>
        <taxon>Pseudomonadati</taxon>
        <taxon>Bacteroidota</taxon>
        <taxon>Bacteroidia</taxon>
        <taxon>Bacteroidales</taxon>
        <taxon>Porphyromonadaceae</taxon>
        <taxon>Porphyromonas</taxon>
    </lineage>
</organism>
<dbReference type="EC" id="3.4.22.47" evidence="8"/>
<dbReference type="EMBL" id="U54691">
    <property type="protein sequence ID" value="AAA99810.1"/>
    <property type="molecule type" value="Genomic_DNA"/>
</dbReference>
<dbReference type="SMR" id="P72197"/>
<dbReference type="ChEMBL" id="CHEMBL5664"/>
<dbReference type="MEROPS" id="C25.002"/>
<dbReference type="BRENDA" id="3.4.22.37">
    <property type="organism ID" value="756"/>
</dbReference>
<dbReference type="BRENDA" id="3.4.22.47">
    <property type="organism ID" value="756"/>
</dbReference>
<dbReference type="GO" id="GO:0005576">
    <property type="term" value="C:extracellular region"/>
    <property type="evidence" value="ECO:0000250"/>
    <property type="project" value="UniProtKB"/>
</dbReference>
<dbReference type="GO" id="GO:0005509">
    <property type="term" value="F:calcium ion binding"/>
    <property type="evidence" value="ECO:0000250"/>
    <property type="project" value="UniProtKB"/>
</dbReference>
<dbReference type="GO" id="GO:0004197">
    <property type="term" value="F:cysteine-type endopeptidase activity"/>
    <property type="evidence" value="ECO:0000250"/>
    <property type="project" value="UniProtKB"/>
</dbReference>
<dbReference type="GO" id="GO:0044179">
    <property type="term" value="P:hemolysis in another organism"/>
    <property type="evidence" value="ECO:0000250"/>
    <property type="project" value="UniProtKB"/>
</dbReference>
<dbReference type="GO" id="GO:0006508">
    <property type="term" value="P:proteolysis"/>
    <property type="evidence" value="ECO:0000250"/>
    <property type="project" value="UniProtKB"/>
</dbReference>
<dbReference type="FunFam" id="2.60.40.10:FF:002823">
    <property type="entry name" value="Gingipain R1"/>
    <property type="match status" value="1"/>
</dbReference>
<dbReference type="FunFam" id="2.60.40.3800:FF:000002">
    <property type="entry name" value="Lys-gingipain W83"/>
    <property type="match status" value="1"/>
</dbReference>
<dbReference type="FunFam" id="3.40.50.1460:FF:000023">
    <property type="entry name" value="Lys-gingipain W83"/>
    <property type="match status" value="1"/>
</dbReference>
<dbReference type="Gene3D" id="2.60.120.200">
    <property type="match status" value="2"/>
</dbReference>
<dbReference type="Gene3D" id="2.60.40.3800">
    <property type="match status" value="1"/>
</dbReference>
<dbReference type="Gene3D" id="3.40.50.1460">
    <property type="match status" value="1"/>
</dbReference>
<dbReference type="Gene3D" id="3.40.50.10390">
    <property type="entry name" value="Gingipain r, domain 1"/>
    <property type="match status" value="1"/>
</dbReference>
<dbReference type="Gene3D" id="2.60.40.10">
    <property type="entry name" value="Immunoglobulins"/>
    <property type="match status" value="4"/>
</dbReference>
<dbReference type="InterPro" id="IPR029030">
    <property type="entry name" value="Caspase-like_dom_sf"/>
</dbReference>
<dbReference type="InterPro" id="IPR011628">
    <property type="entry name" value="Cleaved_adhesin"/>
</dbReference>
<dbReference type="InterPro" id="IPR001769">
    <property type="entry name" value="Gingipain"/>
</dbReference>
<dbReference type="InterPro" id="IPR029031">
    <property type="entry name" value="Gingipain_N_sf"/>
</dbReference>
<dbReference type="InterPro" id="IPR038490">
    <property type="entry name" value="Gingipain_propep_sf"/>
</dbReference>
<dbReference type="InterPro" id="IPR013783">
    <property type="entry name" value="Ig-like_fold"/>
</dbReference>
<dbReference type="InterPro" id="IPR018832">
    <property type="entry name" value="Pept_C25_gingipain_C"/>
</dbReference>
<dbReference type="InterPro" id="IPR005536">
    <property type="entry name" value="Peptidase_C25_Ig-like_domain"/>
</dbReference>
<dbReference type="InterPro" id="IPR012600">
    <property type="entry name" value="Propeptide_C25"/>
</dbReference>
<dbReference type="NCBIfam" id="NF038128">
    <property type="entry name" value="choice_anch_J"/>
    <property type="match status" value="2"/>
</dbReference>
<dbReference type="Pfam" id="PF07675">
    <property type="entry name" value="Cleaved_Adhesin"/>
    <property type="match status" value="2"/>
</dbReference>
<dbReference type="Pfam" id="PF10365">
    <property type="entry name" value="DUF2436"/>
    <property type="match status" value="2"/>
</dbReference>
<dbReference type="Pfam" id="PF01364">
    <property type="entry name" value="Peptidase_C25"/>
    <property type="match status" value="1"/>
</dbReference>
<dbReference type="Pfam" id="PF03785">
    <property type="entry name" value="Peptidase_C25_C"/>
    <property type="match status" value="1"/>
</dbReference>
<dbReference type="Pfam" id="PF08126">
    <property type="entry name" value="Propeptide_C25"/>
    <property type="match status" value="1"/>
</dbReference>
<dbReference type="SUPFAM" id="SSF52129">
    <property type="entry name" value="Caspase-like"/>
    <property type="match status" value="1"/>
</dbReference>
<keyword id="KW-0106">Calcium</keyword>
<keyword id="KW-0378">Hydrolase</keyword>
<keyword id="KW-0479">Metal-binding</keyword>
<keyword id="KW-0645">Protease</keyword>
<keyword id="KW-0964">Secreted</keyword>
<keyword id="KW-0732">Signal</keyword>
<keyword id="KW-0788">Thiol protease</keyword>
<keyword id="KW-0843">Virulence</keyword>
<keyword id="KW-0865">Zymogen</keyword>
<feature type="signal peptide" evidence="5">
    <location>
        <begin position="1"/>
        <end position="24"/>
    </location>
</feature>
<feature type="propeptide" id="PRO_0000395375" evidence="4 5">
    <location>
        <begin position="25"/>
        <end position="228"/>
    </location>
</feature>
<feature type="chain" id="PRO_0000395376" description="Lys-gingipain HG66" evidence="4">
    <location>
        <begin position="229"/>
        <end position="1723"/>
    </location>
</feature>
<feature type="chain" id="PRO_0000395377" description="Lys-gingipain catalytic subunit" evidence="4">
    <location>
        <begin position="229"/>
        <end status="unknown"/>
    </location>
</feature>
<feature type="chain" id="PRO_0000395378" description="39 kDa adhesin" evidence="4">
    <location>
        <begin position="738"/>
        <end status="unknown"/>
    </location>
</feature>
<feature type="chain" id="PRO_0000395379" description="15 kDa adhesin" evidence="4">
    <location>
        <begin position="1156"/>
        <end status="unknown"/>
    </location>
</feature>
<feature type="chain" id="PRO_0000395380" description="44 kDa adhesin" evidence="4">
    <location>
        <begin position="1291"/>
        <end status="unknown"/>
    </location>
</feature>
<feature type="region of interest" description="Disordered" evidence="6">
    <location>
        <begin position="965"/>
        <end position="985"/>
    </location>
</feature>
<feature type="active site" description="Proton donor" evidence="3">
    <location>
        <position position="444"/>
    </location>
</feature>
<feature type="active site" description="Nucleophile" evidence="3">
    <location>
        <position position="477"/>
    </location>
</feature>
<feature type="binding site" evidence="4">
    <location>
        <position position="313"/>
    </location>
    <ligand>
        <name>Ca(2+)</name>
        <dbReference type="ChEBI" id="CHEBI:29108"/>
        <label>1</label>
    </ligand>
</feature>
<feature type="binding site" evidence="4">
    <location>
        <position position="337"/>
    </location>
    <ligand>
        <name>Ca(2+)</name>
        <dbReference type="ChEBI" id="CHEBI:29108"/>
        <label>2</label>
    </ligand>
</feature>
<feature type="binding site" evidence="4">
    <location>
        <position position="339"/>
    </location>
    <ligand>
        <name>Ca(2+)</name>
        <dbReference type="ChEBI" id="CHEBI:29108"/>
        <label>2</label>
    </ligand>
</feature>
<feature type="binding site" evidence="4">
    <location>
        <position position="341"/>
    </location>
    <ligand>
        <name>Ca(2+)</name>
        <dbReference type="ChEBI" id="CHEBI:29108"/>
        <label>2</label>
    </ligand>
</feature>
<feature type="binding site" evidence="4">
    <location>
        <position position="343"/>
    </location>
    <ligand>
        <name>Ca(2+)</name>
        <dbReference type="ChEBI" id="CHEBI:29108"/>
        <label>2</label>
    </ligand>
</feature>
<feature type="binding site" evidence="4">
    <location>
        <position position="482"/>
    </location>
    <ligand>
        <name>Ca(2+)</name>
        <dbReference type="ChEBI" id="CHEBI:29108"/>
        <label>1</label>
    </ligand>
</feature>
<feature type="binding site" evidence="4">
    <location>
        <position position="491"/>
    </location>
    <ligand>
        <name>Ca(2+)</name>
        <dbReference type="ChEBI" id="CHEBI:29108"/>
        <label>1</label>
    </ligand>
</feature>
<feature type="binding site" evidence="4">
    <location>
        <position position="987"/>
    </location>
    <ligand>
        <name>Ca(2+)</name>
        <dbReference type="ChEBI" id="CHEBI:29108"/>
        <label>3</label>
    </ligand>
</feature>
<feature type="binding site" evidence="4">
    <location>
        <position position="989"/>
    </location>
    <ligand>
        <name>Ca(2+)</name>
        <dbReference type="ChEBI" id="CHEBI:29108"/>
        <label>3</label>
    </ligand>
</feature>
<feature type="binding site" evidence="4">
    <location>
        <position position="1000"/>
    </location>
    <ligand>
        <name>Ca(2+)</name>
        <dbReference type="ChEBI" id="CHEBI:29108"/>
        <label>4</label>
    </ligand>
</feature>
<feature type="binding site" evidence="4">
    <location>
        <position position="1002"/>
    </location>
    <ligand>
        <name>Ca(2+)</name>
        <dbReference type="ChEBI" id="CHEBI:29108"/>
        <label>4</label>
    </ligand>
</feature>
<feature type="binding site" evidence="4">
    <location>
        <position position="1004"/>
    </location>
    <ligand>
        <name>Ca(2+)</name>
        <dbReference type="ChEBI" id="CHEBI:29108"/>
        <label>4</label>
    </ligand>
</feature>
<feature type="binding site" evidence="4">
    <location>
        <position position="1006"/>
    </location>
    <ligand>
        <name>Ca(2+)</name>
        <dbReference type="ChEBI" id="CHEBI:29108"/>
        <label>4</label>
    </ligand>
</feature>
<feature type="binding site" evidence="4">
    <location>
        <position position="1021"/>
    </location>
    <ligand>
        <name>Ca(2+)</name>
        <dbReference type="ChEBI" id="CHEBI:29108"/>
        <label>3</label>
    </ligand>
</feature>
<feature type="binding site" evidence="4">
    <location>
        <position position="1023"/>
    </location>
    <ligand>
        <name>Ca(2+)</name>
        <dbReference type="ChEBI" id="CHEBI:29108"/>
        <label>3</label>
    </ligand>
</feature>
<feature type="binding site" evidence="4">
    <location>
        <position position="1042"/>
    </location>
    <ligand>
        <name>Ca(2+)</name>
        <dbReference type="ChEBI" id="CHEBI:29108"/>
        <label>4</label>
    </ligand>
</feature>
<feature type="binding site" evidence="4">
    <location>
        <position position="1145"/>
    </location>
    <ligand>
        <name>Ca(2+)</name>
        <dbReference type="ChEBI" id="CHEBI:29108"/>
        <label>3</label>
    </ligand>
</feature>
<feature type="binding site" evidence="4">
    <location>
        <position position="1146"/>
    </location>
    <ligand>
        <name>Ca(2+)</name>
        <dbReference type="ChEBI" id="CHEBI:29108"/>
        <label>3</label>
    </ligand>
</feature>
<feature type="site" description="Cleavage; site 1" evidence="4">
    <location>
        <begin position="228"/>
        <end position="229"/>
    </location>
</feature>
<feature type="site" description="Cleavage; site 2" evidence="4">
    <location>
        <begin position="737"/>
        <end position="738"/>
    </location>
</feature>
<feature type="site" description="Cleavage; site 3" evidence="4">
    <location>
        <begin position="1155"/>
        <end position="1156"/>
    </location>
</feature>
<feature type="site" description="Cleavage; site 4" evidence="4">
    <location>
        <begin position="1290"/>
        <end position="1291"/>
    </location>
</feature>
<sequence>MRKLLLLIAASLLGVGLYAQNAKIKLDAPTTRTTCTNNSFKQFDASFSFNEVELTKVETKGGTFASVSIPGAFPTGEVGSPEVPAVRKLIAVPVGATPVVRVKSFTEQVYSLNQYGSEKLMPHQPSMSKSDDPEKVPFAYNAAAYARKGFVGQELTQVEMLGTMRGVRIAALTINPVQYDVVANQLKVRNNIEIEVSFQGADEVATQRLYDASFSPYFETAYKQLFNRDVYTDHGDLYNTPVRMLVVAGAKFKEALKPWLTWKAQKGFYLDVHYTDEAEVGTTNASIKAFIHKKYNDGLAASAAPVFLALVGDTDVISGEKGKKTKKVTDLYYSAVDGDYFPEMYTFRMSASSPEELTNIIDKVLMYEKATMPDKSYLEKALLIAGADSYWNPKIGQQTIKYAVQYYYNQDHGYTDVYSYPKAPYTGCYSHLNTGVGFANYTAHGSETSWADPSVTATQVKALTNKNKYFLAIGNCCVTAQFDYPQPCFGEVMTRVKEKGAYAYIGSSPNSYWGEDYYWSVGANAVFGVQPTFEGTSMGSYDATFLEDSYNTVNSIMWAGNLAATHAENIGNVTHIGAHYYWEAYHVLGDGSVMPYRAMPKTNTYTLPASLPQNQASYSIQASAGSYVAISKDGVLYGTGVANASGVATVNMTKQITENGNYDVVITRSNYLPVIKQIQAGEPSPYQPVSNLTATTQGQKVTLKWDAPSAKKAEGSREVKRIGDGLFVTIEPANDVRANEAKVVLAADNVWGDNTGYQFLLDADHNTFGSVIPATGPLFTGTASSNLYSANFEYLIPANADPVVTTQNIIVTGQGEVVIPGGVYDYCITNPEPASGKMWIAGDGGNQPARYDDFTFEAGKKYTFTMRRAGMGDGTDMEVEDDSPASYTYTVYRDGTKIKEGLTATTFEEDGVAAGNHEYCVEVKYTAGVSPKVCKDVTVEGSNEFAPVQNLTGSAVGQKVTLKWDAPNGTPNPNPNPNPGTTTLSESFENGIPASWKTIDADGDGHGWKPGNAPGIAGYNSNGCVYSESFGLGGIGVLTPDNYLITPALDLPNGGKLTFWVCAQDANYASEHYAVYASSTGNDASNFTNALLEETITAKGVRSPEAIRGRIQGTWRQKTVDLPAGTKYVAFRHFQSTDMFYIDLDEVEIKANGKRADFTETFESSTHGEAPAEWTTIDADGDGQGWLCLSSGQLDWLTAHGGTNVVASFSWNGMALNPDNYLISKDVTGATKVKYYYAVNDGFPGDHYAVMISKTGTNAGDFTVVFEETPNGINKGGARFGLSTEADGAKPQSVWIERTVDLPAGTKYVAFRHYNCSDLNYILLDDIQFTMGGSPTPTDYTYTVYRDGTKIKEGLTETTFEEDGVATGNHEYCVEVKYTAGVSPKKCVNVTINPTQFNPVKNLKAQPDGGDVVLKWEAPSAKKAEGSREVKRIGDGLFVTIEPANDVRANEAKVVLAADNVWGDNTGYQFLLDADHNTFGSVIPATGPLFTGTASSNLYSANFEYLIPANADPVVTTQNIIVTGQGEVVIPGGVYDYCITNPEPASGKMWIAGDGGNQPARYDDFTFEAGKKYTFTMRRAGMGDGTDMEVEDDSPASYTYTVYRDGTKIKEGLTETTYRDAGMSAQSHEYCVEVKYAAGVSPKVCVDYIPDGVADVTAQKPYTLTVVGKTITVTCQGEAMIYDMNGRRLAAGRNTVVYTAQGGYYAVMVVVDGKSYVEKLAVK</sequence>
<gene>
    <name evidence="12" type="primary">kgp</name>
</gene>